<keyword id="KW-0665">Pyrimidine biosynthesis</keyword>
<keyword id="KW-0808">Transferase</keyword>
<gene>
    <name evidence="1" type="primary">pyrB</name>
    <name type="ordered locus">BAMEG_0603</name>
</gene>
<feature type="chain" id="PRO_1000116123" description="Aspartate carbamoyltransferase catalytic subunit">
    <location>
        <begin position="1"/>
        <end position="304"/>
    </location>
</feature>
<feature type="binding site" evidence="1">
    <location>
        <position position="49"/>
    </location>
    <ligand>
        <name>carbamoyl phosphate</name>
        <dbReference type="ChEBI" id="CHEBI:58228"/>
    </ligand>
</feature>
<feature type="binding site" evidence="1">
    <location>
        <position position="50"/>
    </location>
    <ligand>
        <name>carbamoyl phosphate</name>
        <dbReference type="ChEBI" id="CHEBI:58228"/>
    </ligand>
</feature>
<feature type="binding site" evidence="1">
    <location>
        <position position="77"/>
    </location>
    <ligand>
        <name>L-aspartate</name>
        <dbReference type="ChEBI" id="CHEBI:29991"/>
    </ligand>
</feature>
<feature type="binding site" evidence="1">
    <location>
        <position position="99"/>
    </location>
    <ligand>
        <name>carbamoyl phosphate</name>
        <dbReference type="ChEBI" id="CHEBI:58228"/>
    </ligand>
</feature>
<feature type="binding site" evidence="1">
    <location>
        <position position="127"/>
    </location>
    <ligand>
        <name>carbamoyl phosphate</name>
        <dbReference type="ChEBI" id="CHEBI:58228"/>
    </ligand>
</feature>
<feature type="binding site" evidence="1">
    <location>
        <position position="130"/>
    </location>
    <ligand>
        <name>carbamoyl phosphate</name>
        <dbReference type="ChEBI" id="CHEBI:58228"/>
    </ligand>
</feature>
<feature type="binding site" evidence="1">
    <location>
        <position position="160"/>
    </location>
    <ligand>
        <name>L-aspartate</name>
        <dbReference type="ChEBI" id="CHEBI:29991"/>
    </ligand>
</feature>
<feature type="binding site" evidence="1">
    <location>
        <position position="211"/>
    </location>
    <ligand>
        <name>L-aspartate</name>
        <dbReference type="ChEBI" id="CHEBI:29991"/>
    </ligand>
</feature>
<feature type="binding site" evidence="1">
    <location>
        <position position="252"/>
    </location>
    <ligand>
        <name>carbamoyl phosphate</name>
        <dbReference type="ChEBI" id="CHEBI:58228"/>
    </ligand>
</feature>
<feature type="binding site" evidence="1">
    <location>
        <position position="253"/>
    </location>
    <ligand>
        <name>carbamoyl phosphate</name>
        <dbReference type="ChEBI" id="CHEBI:58228"/>
    </ligand>
</feature>
<accession>C3L737</accession>
<reference key="1">
    <citation type="submission" date="2008-10" db="EMBL/GenBank/DDBJ databases">
        <title>Genome sequence of Bacillus anthracis str. CDC 684.</title>
        <authorList>
            <person name="Dodson R.J."/>
            <person name="Munk A.C."/>
            <person name="Brettin T."/>
            <person name="Bruce D."/>
            <person name="Detter C."/>
            <person name="Tapia R."/>
            <person name="Han C."/>
            <person name="Sutton G."/>
            <person name="Sims D."/>
        </authorList>
    </citation>
    <scope>NUCLEOTIDE SEQUENCE [LARGE SCALE GENOMIC DNA]</scope>
    <source>
        <strain>CDC 684 / NRRL 3495</strain>
    </source>
</reference>
<organism>
    <name type="scientific">Bacillus anthracis (strain CDC 684 / NRRL 3495)</name>
    <dbReference type="NCBI Taxonomy" id="568206"/>
    <lineage>
        <taxon>Bacteria</taxon>
        <taxon>Bacillati</taxon>
        <taxon>Bacillota</taxon>
        <taxon>Bacilli</taxon>
        <taxon>Bacillales</taxon>
        <taxon>Bacillaceae</taxon>
        <taxon>Bacillus</taxon>
        <taxon>Bacillus cereus group</taxon>
    </lineage>
</organism>
<proteinExistence type="inferred from homology"/>
<sequence>MSHLLTMSELSEVEISEILKDAEDFANGKESKTTEQTFVANLFFENSTRTRFSFEVAEKRLGLDVLNFSADASSVQKGETLYDTIRTLESIGTKAVVIRHEQDRYFDELKDQVNIPILNAGDGCGNHPTQCLLDLLTIKQEFGRFEGLKIAIVGDVRHSRVARSNAEALTKLGATIYFASPEEWKDEDNTFGTYKPLDELVPEVDVMMLLRVQHERHDHYETDIMKEYHEKHGLTVEREKRMKEGSIIMHPAPVNRDVEIASELVECERSRIFKQMENGVYVRMAVLKRALPNVLGGMKHELFV</sequence>
<comment type="function">
    <text evidence="1">Catalyzes the condensation of carbamoyl phosphate and aspartate to form carbamoyl aspartate and inorganic phosphate, the committed step in the de novo pyrimidine nucleotide biosynthesis pathway.</text>
</comment>
<comment type="catalytic activity">
    <reaction evidence="1">
        <text>carbamoyl phosphate + L-aspartate = N-carbamoyl-L-aspartate + phosphate + H(+)</text>
        <dbReference type="Rhea" id="RHEA:20013"/>
        <dbReference type="ChEBI" id="CHEBI:15378"/>
        <dbReference type="ChEBI" id="CHEBI:29991"/>
        <dbReference type="ChEBI" id="CHEBI:32814"/>
        <dbReference type="ChEBI" id="CHEBI:43474"/>
        <dbReference type="ChEBI" id="CHEBI:58228"/>
        <dbReference type="EC" id="2.1.3.2"/>
    </reaction>
</comment>
<comment type="pathway">
    <text evidence="1">Pyrimidine metabolism; UMP biosynthesis via de novo pathway; (S)-dihydroorotate from bicarbonate: step 2/3.</text>
</comment>
<comment type="subunit">
    <text evidence="1">Heterododecamer (2C3:3R2) of six catalytic PyrB chains organized as two trimers (C3), and six regulatory PyrI chains organized as three dimers (R2).</text>
</comment>
<comment type="similarity">
    <text evidence="1">Belongs to the aspartate/ornithine carbamoyltransferase superfamily. ATCase family.</text>
</comment>
<dbReference type="EC" id="2.1.3.2" evidence="1"/>
<dbReference type="EMBL" id="CP001215">
    <property type="protein sequence ID" value="ACP12690.1"/>
    <property type="molecule type" value="Genomic_DNA"/>
</dbReference>
<dbReference type="RefSeq" id="WP_000018849.1">
    <property type="nucleotide sequence ID" value="NC_012581.1"/>
</dbReference>
<dbReference type="SMR" id="C3L737"/>
<dbReference type="GeneID" id="75087026"/>
<dbReference type="KEGG" id="bah:BAMEG_0603"/>
<dbReference type="HOGENOM" id="CLU_043846_2_1_9"/>
<dbReference type="UniPathway" id="UPA00070">
    <property type="reaction ID" value="UER00116"/>
</dbReference>
<dbReference type="GO" id="GO:0005829">
    <property type="term" value="C:cytosol"/>
    <property type="evidence" value="ECO:0007669"/>
    <property type="project" value="TreeGrafter"/>
</dbReference>
<dbReference type="GO" id="GO:0016597">
    <property type="term" value="F:amino acid binding"/>
    <property type="evidence" value="ECO:0007669"/>
    <property type="project" value="InterPro"/>
</dbReference>
<dbReference type="GO" id="GO:0004070">
    <property type="term" value="F:aspartate carbamoyltransferase activity"/>
    <property type="evidence" value="ECO:0007669"/>
    <property type="project" value="UniProtKB-UniRule"/>
</dbReference>
<dbReference type="GO" id="GO:0006207">
    <property type="term" value="P:'de novo' pyrimidine nucleobase biosynthetic process"/>
    <property type="evidence" value="ECO:0007669"/>
    <property type="project" value="InterPro"/>
</dbReference>
<dbReference type="GO" id="GO:0044205">
    <property type="term" value="P:'de novo' UMP biosynthetic process"/>
    <property type="evidence" value="ECO:0007669"/>
    <property type="project" value="UniProtKB-UniRule"/>
</dbReference>
<dbReference type="GO" id="GO:0006520">
    <property type="term" value="P:amino acid metabolic process"/>
    <property type="evidence" value="ECO:0007669"/>
    <property type="project" value="InterPro"/>
</dbReference>
<dbReference type="FunFam" id="3.40.50.1370:FF:000001">
    <property type="entry name" value="Aspartate carbamoyltransferase"/>
    <property type="match status" value="1"/>
</dbReference>
<dbReference type="FunFam" id="3.40.50.1370:FF:000011">
    <property type="entry name" value="Aspartate carbamoyltransferase"/>
    <property type="match status" value="1"/>
</dbReference>
<dbReference type="Gene3D" id="3.40.50.1370">
    <property type="entry name" value="Aspartate/ornithine carbamoyltransferase"/>
    <property type="match status" value="2"/>
</dbReference>
<dbReference type="HAMAP" id="MF_00001">
    <property type="entry name" value="Asp_carb_tr"/>
    <property type="match status" value="1"/>
</dbReference>
<dbReference type="InterPro" id="IPR006132">
    <property type="entry name" value="Asp/Orn_carbamoyltranf_P-bd"/>
</dbReference>
<dbReference type="InterPro" id="IPR006130">
    <property type="entry name" value="Asp/Orn_carbamoylTrfase"/>
</dbReference>
<dbReference type="InterPro" id="IPR036901">
    <property type="entry name" value="Asp/Orn_carbamoylTrfase_sf"/>
</dbReference>
<dbReference type="InterPro" id="IPR002082">
    <property type="entry name" value="Asp_carbamoyltransf"/>
</dbReference>
<dbReference type="InterPro" id="IPR006131">
    <property type="entry name" value="Asp_carbamoyltransf_Asp/Orn-bd"/>
</dbReference>
<dbReference type="NCBIfam" id="TIGR00670">
    <property type="entry name" value="asp_carb_tr"/>
    <property type="match status" value="1"/>
</dbReference>
<dbReference type="NCBIfam" id="NF002032">
    <property type="entry name" value="PRK00856.1"/>
    <property type="match status" value="1"/>
</dbReference>
<dbReference type="PANTHER" id="PTHR45753:SF6">
    <property type="entry name" value="ASPARTATE CARBAMOYLTRANSFERASE"/>
    <property type="match status" value="1"/>
</dbReference>
<dbReference type="PANTHER" id="PTHR45753">
    <property type="entry name" value="ORNITHINE CARBAMOYLTRANSFERASE, MITOCHONDRIAL"/>
    <property type="match status" value="1"/>
</dbReference>
<dbReference type="Pfam" id="PF00185">
    <property type="entry name" value="OTCace"/>
    <property type="match status" value="1"/>
</dbReference>
<dbReference type="Pfam" id="PF02729">
    <property type="entry name" value="OTCace_N"/>
    <property type="match status" value="1"/>
</dbReference>
<dbReference type="PRINTS" id="PR00100">
    <property type="entry name" value="AOTCASE"/>
</dbReference>
<dbReference type="PRINTS" id="PR00101">
    <property type="entry name" value="ATCASE"/>
</dbReference>
<dbReference type="SUPFAM" id="SSF53671">
    <property type="entry name" value="Aspartate/ornithine carbamoyltransferase"/>
    <property type="match status" value="1"/>
</dbReference>
<dbReference type="PROSITE" id="PS00097">
    <property type="entry name" value="CARBAMOYLTRANSFERASE"/>
    <property type="match status" value="1"/>
</dbReference>
<name>PYRB_BACAC</name>
<evidence type="ECO:0000255" key="1">
    <source>
        <dbReference type="HAMAP-Rule" id="MF_00001"/>
    </source>
</evidence>
<protein>
    <recommendedName>
        <fullName evidence="1">Aspartate carbamoyltransferase catalytic subunit</fullName>
        <ecNumber evidence="1">2.1.3.2</ecNumber>
    </recommendedName>
    <alternativeName>
        <fullName evidence="1">Aspartate transcarbamylase</fullName>
        <shortName evidence="1">ATCase</shortName>
    </alternativeName>
</protein>